<name>NU2C_COECR</name>
<gene>
    <name evidence="1" type="primary">ndhB</name>
</gene>
<geneLocation type="chloroplast"/>
<evidence type="ECO:0000255" key="1">
    <source>
        <dbReference type="HAMAP-Rule" id="MF_00445"/>
    </source>
</evidence>
<evidence type="ECO:0000305" key="2"/>
<keyword id="KW-0150">Chloroplast</keyword>
<keyword id="KW-0472">Membrane</keyword>
<keyword id="KW-0520">NAD</keyword>
<keyword id="KW-0521">NADP</keyword>
<keyword id="KW-0934">Plastid</keyword>
<keyword id="KW-0618">Plastoquinone</keyword>
<keyword id="KW-0874">Quinone</keyword>
<keyword id="KW-0793">Thylakoid</keyword>
<keyword id="KW-1278">Translocase</keyword>
<keyword id="KW-0812">Transmembrane</keyword>
<keyword id="KW-1133">Transmembrane helix</keyword>
<keyword id="KW-0813">Transport</keyword>
<comment type="function">
    <text evidence="1">NDH shuttles electrons from NAD(P)H:plastoquinone, via FMN and iron-sulfur (Fe-S) centers, to quinones in the photosynthetic chain and possibly in a chloroplast respiratory chain. The immediate electron acceptor for the enzyme in this species is believed to be plastoquinone. Couples the redox reaction to proton translocation, and thus conserves the redox energy in a proton gradient.</text>
</comment>
<comment type="catalytic activity">
    <reaction evidence="1">
        <text>a plastoquinone + NADH + (n+1) H(+)(in) = a plastoquinol + NAD(+) + n H(+)(out)</text>
        <dbReference type="Rhea" id="RHEA:42608"/>
        <dbReference type="Rhea" id="RHEA-COMP:9561"/>
        <dbReference type="Rhea" id="RHEA-COMP:9562"/>
        <dbReference type="ChEBI" id="CHEBI:15378"/>
        <dbReference type="ChEBI" id="CHEBI:17757"/>
        <dbReference type="ChEBI" id="CHEBI:57540"/>
        <dbReference type="ChEBI" id="CHEBI:57945"/>
        <dbReference type="ChEBI" id="CHEBI:62192"/>
    </reaction>
</comment>
<comment type="catalytic activity">
    <reaction evidence="1">
        <text>a plastoquinone + NADPH + (n+1) H(+)(in) = a plastoquinol + NADP(+) + n H(+)(out)</text>
        <dbReference type="Rhea" id="RHEA:42612"/>
        <dbReference type="Rhea" id="RHEA-COMP:9561"/>
        <dbReference type="Rhea" id="RHEA-COMP:9562"/>
        <dbReference type="ChEBI" id="CHEBI:15378"/>
        <dbReference type="ChEBI" id="CHEBI:17757"/>
        <dbReference type="ChEBI" id="CHEBI:57783"/>
        <dbReference type="ChEBI" id="CHEBI:58349"/>
        <dbReference type="ChEBI" id="CHEBI:62192"/>
    </reaction>
</comment>
<comment type="subunit">
    <text evidence="1">NDH is composed of at least 16 different subunits, 5 of which are encoded in the nucleus.</text>
</comment>
<comment type="subcellular location">
    <subcellularLocation>
        <location evidence="1">Plastid</location>
        <location evidence="1">Chloroplast thylakoid membrane</location>
        <topology evidence="1">Multi-pass membrane protein</topology>
    </subcellularLocation>
</comment>
<comment type="similarity">
    <text evidence="1">Belongs to the complex I subunit 2 family.</text>
</comment>
<comment type="sequence caution" evidence="2">
    <conflict type="erroneous initiation">
        <sequence resource="EMBL-CDS" id="AAN32035"/>
    </conflict>
</comment>
<accession>Q67IG8</accession>
<sequence length="510" mass="56695">MIWHVQNENFILDSTRIFMKAFHLLLFHGSFIFPECILIFGLILLLMIDSTSDQKDRPWFYFISSTSLVMSITALFFRWREEPIISFSGNFQTNNFNEIFQFLILLCSTLCIPLSVEYIECTEMAITEFLLFVLTATLGGMFLCGANDLITIFVAPECFSLCSYLLSGYTKRDVRSNEATTKYLLMGGASSSILVHGLSWLYGLSGGEIELQEIVNGLINTQMYNSPGISIALISITVGIGFKLSPAPFHQWTPDVYEGSPTPVVAFLSVTSKVAASASATRIFDIPFYFSSTEWHLLLEILAILSMILGNLIALTQTSMKRMLAYSSIGQIGYVIIGIIVGDSNDGYASMITYMLFYISMNLGTFACIVSFGLRTGTDNIRDYAGLYTKDPFLALSSALCLLSLGGLPPLAGFFGKLYLFWCGWQAGLYFLVSIGLLTSVVSIYYYLKIIKLLMTGRNQEITPHVRNYRRSPLRSNNSIELSMTVCVIASTIPGISMNPILAIAQDTLF</sequence>
<proteinExistence type="inferred from homology"/>
<protein>
    <recommendedName>
        <fullName evidence="1">NAD(P)H-quinone oxidoreductase subunit 2, chloroplastic</fullName>
        <ecNumber evidence="1">7.1.1.-</ecNumber>
    </recommendedName>
    <alternativeName>
        <fullName evidence="1">NAD(P)H dehydrogenase, subunit 2</fullName>
    </alternativeName>
    <alternativeName>
        <fullName evidence="1">NADH-plastoquinone oxidoreductase subunit 2</fullName>
    </alternativeName>
</protein>
<feature type="chain" id="PRO_0000117659" description="NAD(P)H-quinone oxidoreductase subunit 2, chloroplastic">
    <location>
        <begin position="1"/>
        <end position="510"/>
    </location>
</feature>
<feature type="transmembrane region" description="Helical" evidence="1">
    <location>
        <begin position="24"/>
        <end position="44"/>
    </location>
</feature>
<feature type="transmembrane region" description="Helical" evidence="1">
    <location>
        <begin position="59"/>
        <end position="79"/>
    </location>
</feature>
<feature type="transmembrane region" description="Helical" evidence="1">
    <location>
        <begin position="99"/>
        <end position="119"/>
    </location>
</feature>
<feature type="transmembrane region" description="Helical" evidence="1">
    <location>
        <begin position="124"/>
        <end position="144"/>
    </location>
</feature>
<feature type="transmembrane region" description="Helical" evidence="1">
    <location>
        <begin position="149"/>
        <end position="169"/>
    </location>
</feature>
<feature type="transmembrane region" description="Helical" evidence="1">
    <location>
        <begin position="184"/>
        <end position="204"/>
    </location>
</feature>
<feature type="transmembrane region" description="Helical" evidence="1">
    <location>
        <begin position="229"/>
        <end position="249"/>
    </location>
</feature>
<feature type="transmembrane region" description="Helical" evidence="1">
    <location>
        <begin position="295"/>
        <end position="315"/>
    </location>
</feature>
<feature type="transmembrane region" description="Helical" evidence="1">
    <location>
        <begin position="323"/>
        <end position="343"/>
    </location>
</feature>
<feature type="transmembrane region" description="Helical" evidence="1">
    <location>
        <begin position="354"/>
        <end position="374"/>
    </location>
</feature>
<feature type="transmembrane region" description="Helical" evidence="1">
    <location>
        <begin position="395"/>
        <end position="415"/>
    </location>
</feature>
<feature type="transmembrane region" description="Helical" evidence="1">
    <location>
        <begin position="418"/>
        <end position="438"/>
    </location>
</feature>
<organism>
    <name type="scientific">Coelogyne cristata</name>
    <name type="common">Orchid</name>
    <name type="synonym">Cymbidium speciosissimum</name>
    <dbReference type="NCBI Taxonomy" id="38221"/>
    <lineage>
        <taxon>Eukaryota</taxon>
        <taxon>Viridiplantae</taxon>
        <taxon>Streptophyta</taxon>
        <taxon>Embryophyta</taxon>
        <taxon>Tracheophyta</taxon>
        <taxon>Spermatophyta</taxon>
        <taxon>Magnoliopsida</taxon>
        <taxon>Liliopsida</taxon>
        <taxon>Asparagales</taxon>
        <taxon>Orchidaceae</taxon>
        <taxon>Epidendroideae</taxon>
        <taxon>Arethuseae</taxon>
        <taxon>Coelogyninae</taxon>
        <taxon>Coelogyne</taxon>
    </lineage>
</organism>
<reference key="1">
    <citation type="submission" date="2002-09" db="EMBL/GenBank/DDBJ databases">
        <title>Phylogenetic relationships among the major lineages of Asparagales based on a large chloroplast data set.</title>
        <authorList>
            <person name="McPherson M.A."/>
            <person name="Rai H.S."/>
            <person name="Wong W.A."/>
            <person name="Graham S.W."/>
        </authorList>
    </citation>
    <scope>NUCLEOTIDE SEQUENCE [GENOMIC DNA]</scope>
</reference>
<dbReference type="EC" id="7.1.1.-" evidence="1"/>
<dbReference type="EMBL" id="AY147475">
    <property type="protein sequence ID" value="AAN32035.1"/>
    <property type="status" value="ALT_INIT"/>
    <property type="molecule type" value="Genomic_DNA"/>
</dbReference>
<dbReference type="SMR" id="Q67IG8"/>
<dbReference type="GO" id="GO:0009535">
    <property type="term" value="C:chloroplast thylakoid membrane"/>
    <property type="evidence" value="ECO:0007669"/>
    <property type="project" value="UniProtKB-SubCell"/>
</dbReference>
<dbReference type="GO" id="GO:0008137">
    <property type="term" value="F:NADH dehydrogenase (ubiquinone) activity"/>
    <property type="evidence" value="ECO:0007669"/>
    <property type="project" value="InterPro"/>
</dbReference>
<dbReference type="GO" id="GO:0048038">
    <property type="term" value="F:quinone binding"/>
    <property type="evidence" value="ECO:0007669"/>
    <property type="project" value="UniProtKB-KW"/>
</dbReference>
<dbReference type="GO" id="GO:0042773">
    <property type="term" value="P:ATP synthesis coupled electron transport"/>
    <property type="evidence" value="ECO:0007669"/>
    <property type="project" value="InterPro"/>
</dbReference>
<dbReference type="GO" id="GO:0019684">
    <property type="term" value="P:photosynthesis, light reaction"/>
    <property type="evidence" value="ECO:0007669"/>
    <property type="project" value="UniProtKB-UniRule"/>
</dbReference>
<dbReference type="HAMAP" id="MF_00445">
    <property type="entry name" value="NDH1_NuoN_1"/>
    <property type="match status" value="1"/>
</dbReference>
<dbReference type="InterPro" id="IPR010096">
    <property type="entry name" value="NADH-Q_OxRdtase_suN/2"/>
</dbReference>
<dbReference type="InterPro" id="IPR001750">
    <property type="entry name" value="ND/Mrp_TM"/>
</dbReference>
<dbReference type="InterPro" id="IPR045693">
    <property type="entry name" value="Ndh2_N"/>
</dbReference>
<dbReference type="NCBIfam" id="TIGR01770">
    <property type="entry name" value="NDH_I_N"/>
    <property type="match status" value="1"/>
</dbReference>
<dbReference type="NCBIfam" id="NF002701">
    <property type="entry name" value="PRK02504.1"/>
    <property type="match status" value="1"/>
</dbReference>
<dbReference type="PANTHER" id="PTHR22773">
    <property type="entry name" value="NADH DEHYDROGENASE"/>
    <property type="match status" value="1"/>
</dbReference>
<dbReference type="Pfam" id="PF19530">
    <property type="entry name" value="Ndh2_N"/>
    <property type="match status" value="1"/>
</dbReference>
<dbReference type="Pfam" id="PF00361">
    <property type="entry name" value="Proton_antipo_M"/>
    <property type="match status" value="1"/>
</dbReference>
<dbReference type="PRINTS" id="PR01434">
    <property type="entry name" value="NADHDHGNASE5"/>
</dbReference>